<feature type="chain" id="PRO_0000346627" description="Nucleoid occlusion protein">
    <location>
        <begin position="1"/>
        <end position="290"/>
    </location>
</feature>
<feature type="DNA-binding region" description="H-T-H motif" evidence="1">
    <location>
        <begin position="153"/>
        <end position="172"/>
    </location>
</feature>
<accession>Q6HAF5</accession>
<keyword id="KW-0131">Cell cycle</keyword>
<keyword id="KW-0132">Cell division</keyword>
<keyword id="KW-0963">Cytoplasm</keyword>
<keyword id="KW-0238">DNA-binding</keyword>
<keyword id="KW-0717">Septation</keyword>
<organism>
    <name type="scientific">Bacillus thuringiensis subsp. konkukian (strain 97-27)</name>
    <dbReference type="NCBI Taxonomy" id="281309"/>
    <lineage>
        <taxon>Bacteria</taxon>
        <taxon>Bacillati</taxon>
        <taxon>Bacillota</taxon>
        <taxon>Bacilli</taxon>
        <taxon>Bacillales</taxon>
        <taxon>Bacillaceae</taxon>
        <taxon>Bacillus</taxon>
        <taxon>Bacillus cereus group</taxon>
    </lineage>
</organism>
<comment type="function">
    <text evidence="1">Effects nucleoid occlusion by binding relatively nonspecifically to DNA and preventing the assembly of the division machinery in the vicinity of the nucleoid, especially under conditions that disturb the cell cycle. It helps to coordinate cell division and chromosome segregation by preventing the formation of the Z ring through the nucleoid, which would cause chromosome breakage.</text>
</comment>
<comment type="subcellular location">
    <subcellularLocation>
        <location evidence="1">Cytoplasm</location>
        <location evidence="1">Nucleoid</location>
    </subcellularLocation>
</comment>
<comment type="similarity">
    <text evidence="1">Belongs to the ParB family.</text>
</comment>
<name>NOC_BACHK</name>
<gene>
    <name evidence="1" type="primary">noc</name>
    <name type="ordered locus">BT9727_5162</name>
</gene>
<dbReference type="EMBL" id="AE017355">
    <property type="protein sequence ID" value="AAT63354.1"/>
    <property type="molecule type" value="Genomic_DNA"/>
</dbReference>
<dbReference type="RefSeq" id="WP_000799028.1">
    <property type="nucleotide sequence ID" value="NC_005957.1"/>
</dbReference>
<dbReference type="RefSeq" id="YP_039471.1">
    <property type="nucleotide sequence ID" value="NC_005957.1"/>
</dbReference>
<dbReference type="SMR" id="Q6HAF5"/>
<dbReference type="GeneID" id="45025309"/>
<dbReference type="KEGG" id="btk:BT9727_5162"/>
<dbReference type="PATRIC" id="fig|281309.8.peg.5487"/>
<dbReference type="HOGENOM" id="CLU_023853_0_1_9"/>
<dbReference type="Proteomes" id="UP000001301">
    <property type="component" value="Chromosome"/>
</dbReference>
<dbReference type="GO" id="GO:0005694">
    <property type="term" value="C:chromosome"/>
    <property type="evidence" value="ECO:0007669"/>
    <property type="project" value="TreeGrafter"/>
</dbReference>
<dbReference type="GO" id="GO:0005737">
    <property type="term" value="C:cytoplasm"/>
    <property type="evidence" value="ECO:0007669"/>
    <property type="project" value="UniProtKB-UniRule"/>
</dbReference>
<dbReference type="GO" id="GO:0009295">
    <property type="term" value="C:nucleoid"/>
    <property type="evidence" value="ECO:0007669"/>
    <property type="project" value="UniProtKB-SubCell"/>
</dbReference>
<dbReference type="GO" id="GO:0003677">
    <property type="term" value="F:DNA binding"/>
    <property type="evidence" value="ECO:0007669"/>
    <property type="project" value="UniProtKB-UniRule"/>
</dbReference>
<dbReference type="GO" id="GO:0007059">
    <property type="term" value="P:chromosome segregation"/>
    <property type="evidence" value="ECO:0007669"/>
    <property type="project" value="TreeGrafter"/>
</dbReference>
<dbReference type="GO" id="GO:0000917">
    <property type="term" value="P:division septum assembly"/>
    <property type="evidence" value="ECO:0007669"/>
    <property type="project" value="UniProtKB-KW"/>
</dbReference>
<dbReference type="GO" id="GO:0045881">
    <property type="term" value="P:positive regulation of sporulation resulting in formation of a cellular spore"/>
    <property type="evidence" value="ECO:0007669"/>
    <property type="project" value="TreeGrafter"/>
</dbReference>
<dbReference type="CDD" id="cd16393">
    <property type="entry name" value="SPO0J_N"/>
    <property type="match status" value="1"/>
</dbReference>
<dbReference type="FunFam" id="1.10.10.2830:FF:000001">
    <property type="entry name" value="Chromosome partitioning protein ParB"/>
    <property type="match status" value="1"/>
</dbReference>
<dbReference type="FunFam" id="3.90.1530.30:FF:000001">
    <property type="entry name" value="Chromosome partitioning protein ParB"/>
    <property type="match status" value="1"/>
</dbReference>
<dbReference type="Gene3D" id="1.10.10.2830">
    <property type="match status" value="1"/>
</dbReference>
<dbReference type="Gene3D" id="3.90.1530.30">
    <property type="match status" value="1"/>
</dbReference>
<dbReference type="HAMAP" id="MF_02015">
    <property type="entry name" value="ParB_Noc"/>
    <property type="match status" value="1"/>
</dbReference>
<dbReference type="InterPro" id="IPR050336">
    <property type="entry name" value="Chromosome_partition/occlusion"/>
</dbReference>
<dbReference type="InterPro" id="IPR041468">
    <property type="entry name" value="HTH_ParB/Spo0J"/>
</dbReference>
<dbReference type="InterPro" id="IPR023705">
    <property type="entry name" value="Nucleoid_occlusion_protein"/>
</dbReference>
<dbReference type="InterPro" id="IPR004437">
    <property type="entry name" value="ParB/RepB/Spo0J"/>
</dbReference>
<dbReference type="InterPro" id="IPR003115">
    <property type="entry name" value="ParB/Sulfiredoxin_dom"/>
</dbReference>
<dbReference type="InterPro" id="IPR036086">
    <property type="entry name" value="ParB/Sulfiredoxin_sf"/>
</dbReference>
<dbReference type="NCBIfam" id="TIGR04285">
    <property type="entry name" value="nucleoid_noc"/>
    <property type="match status" value="1"/>
</dbReference>
<dbReference type="NCBIfam" id="TIGR00180">
    <property type="entry name" value="parB_part"/>
    <property type="match status" value="1"/>
</dbReference>
<dbReference type="PANTHER" id="PTHR33375">
    <property type="entry name" value="CHROMOSOME-PARTITIONING PROTEIN PARB-RELATED"/>
    <property type="match status" value="1"/>
</dbReference>
<dbReference type="PANTHER" id="PTHR33375:SF8">
    <property type="entry name" value="NUCLEOID OCCLUSION PROTEIN"/>
    <property type="match status" value="1"/>
</dbReference>
<dbReference type="Pfam" id="PF17762">
    <property type="entry name" value="HTH_ParB"/>
    <property type="match status" value="1"/>
</dbReference>
<dbReference type="Pfam" id="PF02195">
    <property type="entry name" value="ParBc"/>
    <property type="match status" value="1"/>
</dbReference>
<dbReference type="SMART" id="SM00470">
    <property type="entry name" value="ParB"/>
    <property type="match status" value="1"/>
</dbReference>
<dbReference type="SUPFAM" id="SSF110849">
    <property type="entry name" value="ParB/Sulfiredoxin"/>
    <property type="match status" value="1"/>
</dbReference>
<protein>
    <recommendedName>
        <fullName evidence="1">Nucleoid occlusion protein</fullName>
        <shortName evidence="1">Noc</shortName>
    </recommendedName>
</protein>
<proteinExistence type="inferred from homology"/>
<sequence length="290" mass="33617">MKNTFSRLFGFGDKESEFELQDESHEEIDKKVYEEIQEIPIVNITPNRYQPRTVFDDARIEELALTIRTHGLIQPIVVRQYEDDKYEIIAGERRFRAATKLGWEKVPAIIKNLNDTETASVALIENLQREELTAIEEAVAYQKLIELHNLTQEALAQRLGKGQSTIANKLRLLKLPEEIKSALLEKSITERHARALIPLKNEELQLKVLQEIVEKQLNVKQTEERITKLLEEAKPKRKAKQKAVSRDTRIAMNTIRQSLQMVADSGLNVNSEEEEFDEYYQITIQIPKKK</sequence>
<reference key="1">
    <citation type="journal article" date="2006" name="J. Bacteriol.">
        <title>Pathogenomic sequence analysis of Bacillus cereus and Bacillus thuringiensis isolates closely related to Bacillus anthracis.</title>
        <authorList>
            <person name="Han C.S."/>
            <person name="Xie G."/>
            <person name="Challacombe J.F."/>
            <person name="Altherr M.R."/>
            <person name="Bhotika S.S."/>
            <person name="Bruce D."/>
            <person name="Campbell C.S."/>
            <person name="Campbell M.L."/>
            <person name="Chen J."/>
            <person name="Chertkov O."/>
            <person name="Cleland C."/>
            <person name="Dimitrijevic M."/>
            <person name="Doggett N.A."/>
            <person name="Fawcett J.J."/>
            <person name="Glavina T."/>
            <person name="Goodwin L.A."/>
            <person name="Hill K.K."/>
            <person name="Hitchcock P."/>
            <person name="Jackson P.J."/>
            <person name="Keim P."/>
            <person name="Kewalramani A.R."/>
            <person name="Longmire J."/>
            <person name="Lucas S."/>
            <person name="Malfatti S."/>
            <person name="McMurry K."/>
            <person name="Meincke L.J."/>
            <person name="Misra M."/>
            <person name="Moseman B.L."/>
            <person name="Mundt M."/>
            <person name="Munk A.C."/>
            <person name="Okinaka R.T."/>
            <person name="Parson-Quintana B."/>
            <person name="Reilly L.P."/>
            <person name="Richardson P."/>
            <person name="Robinson D.L."/>
            <person name="Rubin E."/>
            <person name="Saunders E."/>
            <person name="Tapia R."/>
            <person name="Tesmer J.G."/>
            <person name="Thayer N."/>
            <person name="Thompson L.S."/>
            <person name="Tice H."/>
            <person name="Ticknor L.O."/>
            <person name="Wills P.L."/>
            <person name="Brettin T.S."/>
            <person name="Gilna P."/>
        </authorList>
    </citation>
    <scope>NUCLEOTIDE SEQUENCE [LARGE SCALE GENOMIC DNA]</scope>
    <source>
        <strain>97-27</strain>
    </source>
</reference>
<evidence type="ECO:0000255" key="1">
    <source>
        <dbReference type="HAMAP-Rule" id="MF_02015"/>
    </source>
</evidence>